<dbReference type="EMBL" id="AK171079">
    <property type="protein sequence ID" value="BAE42233.1"/>
    <property type="molecule type" value="mRNA"/>
</dbReference>
<dbReference type="EMBL" id="BC028802">
    <property type="protein sequence ID" value="AAH28802.1"/>
    <property type="status" value="ALT_SEQ"/>
    <property type="molecule type" value="mRNA"/>
</dbReference>
<dbReference type="EMBL" id="BC056165">
    <property type="protein sequence ID" value="AAH56165.2"/>
    <property type="status" value="ALT_INIT"/>
    <property type="molecule type" value="mRNA"/>
</dbReference>
<dbReference type="EMBL" id="BC089369">
    <property type="protein sequence ID" value="AAH89369.2"/>
    <property type="status" value="ALT_INIT"/>
    <property type="molecule type" value="mRNA"/>
</dbReference>
<dbReference type="CCDS" id="CCDS51089.1"/>
<dbReference type="RefSeq" id="NP_081608.1">
    <property type="nucleotide sequence ID" value="NM_027332.3"/>
</dbReference>
<dbReference type="RefSeq" id="NP_081647.2">
    <property type="nucleotide sequence ID" value="NM_027371.3"/>
</dbReference>
<dbReference type="SMR" id="Q7TND5"/>
<dbReference type="BioGRID" id="213961">
    <property type="interactions" value="1"/>
</dbReference>
<dbReference type="FunCoup" id="Q7TND5">
    <property type="interactions" value="1300"/>
</dbReference>
<dbReference type="IntAct" id="Q7TND5">
    <property type="interactions" value="1"/>
</dbReference>
<dbReference type="MINT" id="Q7TND5"/>
<dbReference type="STRING" id="10090.ENSMUSP00000029838"/>
<dbReference type="GlyGen" id="Q7TND5">
    <property type="glycosylation" value="1 site, 1 O-linked glycan (1 site)"/>
</dbReference>
<dbReference type="iPTMnet" id="Q7TND5"/>
<dbReference type="PhosphoSitePlus" id="Q7TND5"/>
<dbReference type="PaxDb" id="10090-ENSMUSP00000029838"/>
<dbReference type="PeptideAtlas" id="Q7TND5"/>
<dbReference type="ProteomicsDB" id="260925"/>
<dbReference type="Pumba" id="Q7TND5"/>
<dbReference type="Antibodypedia" id="19767">
    <property type="antibodies" value="40 antibodies from 17 providers"/>
</dbReference>
<dbReference type="DNASU" id="70285"/>
<dbReference type="Ensembl" id="ENSMUST00000029838.11">
    <property type="protein sequence ID" value="ENSMUSP00000029838.7"/>
    <property type="gene ID" value="ENSMUSG00000028187.11"/>
</dbReference>
<dbReference type="GeneID" id="70285"/>
<dbReference type="KEGG" id="mmu:70285"/>
<dbReference type="UCSC" id="uc008rrl.2">
    <property type="organism name" value="mouse"/>
</dbReference>
<dbReference type="AGR" id="MGI:1917535"/>
<dbReference type="CTD" id="80135"/>
<dbReference type="MGI" id="MGI:1917535">
    <property type="gene designation" value="Rpf1"/>
</dbReference>
<dbReference type="VEuPathDB" id="HostDB:ENSMUSG00000028187"/>
<dbReference type="eggNOG" id="KOG2780">
    <property type="taxonomic scope" value="Eukaryota"/>
</dbReference>
<dbReference type="GeneTree" id="ENSGT00940000153231"/>
<dbReference type="HOGENOM" id="CLU_040063_1_0_1"/>
<dbReference type="InParanoid" id="Q7TND5"/>
<dbReference type="OMA" id="AWIISNK"/>
<dbReference type="OrthoDB" id="10253204at2759"/>
<dbReference type="PhylomeDB" id="Q7TND5"/>
<dbReference type="TreeFam" id="TF105897"/>
<dbReference type="BioGRID-ORCS" id="70285">
    <property type="hits" value="18 hits in 76 CRISPR screens"/>
</dbReference>
<dbReference type="ChiTaRS" id="Rpf1">
    <property type="organism name" value="mouse"/>
</dbReference>
<dbReference type="PRO" id="PR:Q7TND5"/>
<dbReference type="Proteomes" id="UP000000589">
    <property type="component" value="Chromosome 3"/>
</dbReference>
<dbReference type="RNAct" id="Q7TND5">
    <property type="molecule type" value="protein"/>
</dbReference>
<dbReference type="Bgee" id="ENSMUSG00000028187">
    <property type="expression patterns" value="Expressed in embryonic post-anal tail and 256 other cell types or tissues"/>
</dbReference>
<dbReference type="ExpressionAtlas" id="Q7TND5">
    <property type="expression patterns" value="baseline and differential"/>
</dbReference>
<dbReference type="GO" id="GO:0005730">
    <property type="term" value="C:nucleolus"/>
    <property type="evidence" value="ECO:0000250"/>
    <property type="project" value="UniProtKB"/>
</dbReference>
<dbReference type="GO" id="GO:0003723">
    <property type="term" value="F:RNA binding"/>
    <property type="evidence" value="ECO:0000250"/>
    <property type="project" value="UniProtKB"/>
</dbReference>
<dbReference type="GO" id="GO:0042134">
    <property type="term" value="F:rRNA primary transcript binding"/>
    <property type="evidence" value="ECO:0007669"/>
    <property type="project" value="InterPro"/>
</dbReference>
<dbReference type="GO" id="GO:0006364">
    <property type="term" value="P:rRNA processing"/>
    <property type="evidence" value="ECO:0007669"/>
    <property type="project" value="UniProtKB-KW"/>
</dbReference>
<dbReference type="FunFam" id="3.40.50.10480:FF:000002">
    <property type="entry name" value="Ribosome production factor 1"/>
    <property type="match status" value="1"/>
</dbReference>
<dbReference type="Gene3D" id="3.40.50.10480">
    <property type="entry name" value="Probable brix-domain ribosomal biogenesis protein"/>
    <property type="match status" value="1"/>
</dbReference>
<dbReference type="InterPro" id="IPR007109">
    <property type="entry name" value="Brix"/>
</dbReference>
<dbReference type="InterPro" id="IPR044281">
    <property type="entry name" value="IMP4/RPF1"/>
</dbReference>
<dbReference type="PANTHER" id="PTHR22734:SF3">
    <property type="entry name" value="RIBOSOME PRODUCTION FACTOR 1"/>
    <property type="match status" value="1"/>
</dbReference>
<dbReference type="PANTHER" id="PTHR22734">
    <property type="entry name" value="U3 SMALL NUCLEOLAR RIBONUCLEOPROTEIN PROTEIN IMP4"/>
    <property type="match status" value="1"/>
</dbReference>
<dbReference type="Pfam" id="PF04427">
    <property type="entry name" value="Brix"/>
    <property type="match status" value="1"/>
</dbReference>
<dbReference type="SMART" id="SM00879">
    <property type="entry name" value="Brix"/>
    <property type="match status" value="1"/>
</dbReference>
<dbReference type="SUPFAM" id="SSF52954">
    <property type="entry name" value="Class II aaRS ABD-related"/>
    <property type="match status" value="1"/>
</dbReference>
<dbReference type="PROSITE" id="PS50833">
    <property type="entry name" value="BRIX"/>
    <property type="match status" value="1"/>
</dbReference>
<name>RPF1_MOUSE</name>
<organism>
    <name type="scientific">Mus musculus</name>
    <name type="common">Mouse</name>
    <dbReference type="NCBI Taxonomy" id="10090"/>
    <lineage>
        <taxon>Eukaryota</taxon>
        <taxon>Metazoa</taxon>
        <taxon>Chordata</taxon>
        <taxon>Craniata</taxon>
        <taxon>Vertebrata</taxon>
        <taxon>Euteleostomi</taxon>
        <taxon>Mammalia</taxon>
        <taxon>Eutheria</taxon>
        <taxon>Euarchontoglires</taxon>
        <taxon>Glires</taxon>
        <taxon>Rodentia</taxon>
        <taxon>Myomorpha</taxon>
        <taxon>Muroidea</taxon>
        <taxon>Muridae</taxon>
        <taxon>Murinae</taxon>
        <taxon>Mus</taxon>
        <taxon>Mus</taxon>
    </lineage>
</organism>
<evidence type="ECO:0000250" key="1"/>
<evidence type="ECO:0000255" key="2">
    <source>
        <dbReference type="PROSITE-ProRule" id="PRU00034"/>
    </source>
</evidence>
<evidence type="ECO:0000256" key="3">
    <source>
        <dbReference type="SAM" id="MobiDB-lite"/>
    </source>
</evidence>
<evidence type="ECO:0000305" key="4"/>
<reference key="1">
    <citation type="journal article" date="2005" name="Science">
        <title>The transcriptional landscape of the mammalian genome.</title>
        <authorList>
            <person name="Carninci P."/>
            <person name="Kasukawa T."/>
            <person name="Katayama S."/>
            <person name="Gough J."/>
            <person name="Frith M.C."/>
            <person name="Maeda N."/>
            <person name="Oyama R."/>
            <person name="Ravasi T."/>
            <person name="Lenhard B."/>
            <person name="Wells C."/>
            <person name="Kodzius R."/>
            <person name="Shimokawa K."/>
            <person name="Bajic V.B."/>
            <person name="Brenner S.E."/>
            <person name="Batalov S."/>
            <person name="Forrest A.R."/>
            <person name="Zavolan M."/>
            <person name="Davis M.J."/>
            <person name="Wilming L.G."/>
            <person name="Aidinis V."/>
            <person name="Allen J.E."/>
            <person name="Ambesi-Impiombato A."/>
            <person name="Apweiler R."/>
            <person name="Aturaliya R.N."/>
            <person name="Bailey T.L."/>
            <person name="Bansal M."/>
            <person name="Baxter L."/>
            <person name="Beisel K.W."/>
            <person name="Bersano T."/>
            <person name="Bono H."/>
            <person name="Chalk A.M."/>
            <person name="Chiu K.P."/>
            <person name="Choudhary V."/>
            <person name="Christoffels A."/>
            <person name="Clutterbuck D.R."/>
            <person name="Crowe M.L."/>
            <person name="Dalla E."/>
            <person name="Dalrymple B.P."/>
            <person name="de Bono B."/>
            <person name="Della Gatta G."/>
            <person name="di Bernardo D."/>
            <person name="Down T."/>
            <person name="Engstrom P."/>
            <person name="Fagiolini M."/>
            <person name="Faulkner G."/>
            <person name="Fletcher C.F."/>
            <person name="Fukushima T."/>
            <person name="Furuno M."/>
            <person name="Futaki S."/>
            <person name="Gariboldi M."/>
            <person name="Georgii-Hemming P."/>
            <person name="Gingeras T.R."/>
            <person name="Gojobori T."/>
            <person name="Green R.E."/>
            <person name="Gustincich S."/>
            <person name="Harbers M."/>
            <person name="Hayashi Y."/>
            <person name="Hensch T.K."/>
            <person name="Hirokawa N."/>
            <person name="Hill D."/>
            <person name="Huminiecki L."/>
            <person name="Iacono M."/>
            <person name="Ikeo K."/>
            <person name="Iwama A."/>
            <person name="Ishikawa T."/>
            <person name="Jakt M."/>
            <person name="Kanapin A."/>
            <person name="Katoh M."/>
            <person name="Kawasawa Y."/>
            <person name="Kelso J."/>
            <person name="Kitamura H."/>
            <person name="Kitano H."/>
            <person name="Kollias G."/>
            <person name="Krishnan S.P."/>
            <person name="Kruger A."/>
            <person name="Kummerfeld S.K."/>
            <person name="Kurochkin I.V."/>
            <person name="Lareau L.F."/>
            <person name="Lazarevic D."/>
            <person name="Lipovich L."/>
            <person name="Liu J."/>
            <person name="Liuni S."/>
            <person name="McWilliam S."/>
            <person name="Madan Babu M."/>
            <person name="Madera M."/>
            <person name="Marchionni L."/>
            <person name="Matsuda H."/>
            <person name="Matsuzawa S."/>
            <person name="Miki H."/>
            <person name="Mignone F."/>
            <person name="Miyake S."/>
            <person name="Morris K."/>
            <person name="Mottagui-Tabar S."/>
            <person name="Mulder N."/>
            <person name="Nakano N."/>
            <person name="Nakauchi H."/>
            <person name="Ng P."/>
            <person name="Nilsson R."/>
            <person name="Nishiguchi S."/>
            <person name="Nishikawa S."/>
            <person name="Nori F."/>
            <person name="Ohara O."/>
            <person name="Okazaki Y."/>
            <person name="Orlando V."/>
            <person name="Pang K.C."/>
            <person name="Pavan W.J."/>
            <person name="Pavesi G."/>
            <person name="Pesole G."/>
            <person name="Petrovsky N."/>
            <person name="Piazza S."/>
            <person name="Reed J."/>
            <person name="Reid J.F."/>
            <person name="Ring B.Z."/>
            <person name="Ringwald M."/>
            <person name="Rost B."/>
            <person name="Ruan Y."/>
            <person name="Salzberg S.L."/>
            <person name="Sandelin A."/>
            <person name="Schneider C."/>
            <person name="Schoenbach C."/>
            <person name="Sekiguchi K."/>
            <person name="Semple C.A."/>
            <person name="Seno S."/>
            <person name="Sessa L."/>
            <person name="Sheng Y."/>
            <person name="Shibata Y."/>
            <person name="Shimada H."/>
            <person name="Shimada K."/>
            <person name="Silva D."/>
            <person name="Sinclair B."/>
            <person name="Sperling S."/>
            <person name="Stupka E."/>
            <person name="Sugiura K."/>
            <person name="Sultana R."/>
            <person name="Takenaka Y."/>
            <person name="Taki K."/>
            <person name="Tammoja K."/>
            <person name="Tan S.L."/>
            <person name="Tang S."/>
            <person name="Taylor M.S."/>
            <person name="Tegner J."/>
            <person name="Teichmann S.A."/>
            <person name="Ueda H.R."/>
            <person name="van Nimwegen E."/>
            <person name="Verardo R."/>
            <person name="Wei C.L."/>
            <person name="Yagi K."/>
            <person name="Yamanishi H."/>
            <person name="Zabarovsky E."/>
            <person name="Zhu S."/>
            <person name="Zimmer A."/>
            <person name="Hide W."/>
            <person name="Bult C."/>
            <person name="Grimmond S.M."/>
            <person name="Teasdale R.D."/>
            <person name="Liu E.T."/>
            <person name="Brusic V."/>
            <person name="Quackenbush J."/>
            <person name="Wahlestedt C."/>
            <person name="Mattick J.S."/>
            <person name="Hume D.A."/>
            <person name="Kai C."/>
            <person name="Sasaki D."/>
            <person name="Tomaru Y."/>
            <person name="Fukuda S."/>
            <person name="Kanamori-Katayama M."/>
            <person name="Suzuki M."/>
            <person name="Aoki J."/>
            <person name="Arakawa T."/>
            <person name="Iida J."/>
            <person name="Imamura K."/>
            <person name="Itoh M."/>
            <person name="Kato T."/>
            <person name="Kawaji H."/>
            <person name="Kawagashira N."/>
            <person name="Kawashima T."/>
            <person name="Kojima M."/>
            <person name="Kondo S."/>
            <person name="Konno H."/>
            <person name="Nakano K."/>
            <person name="Ninomiya N."/>
            <person name="Nishio T."/>
            <person name="Okada M."/>
            <person name="Plessy C."/>
            <person name="Shibata K."/>
            <person name="Shiraki T."/>
            <person name="Suzuki S."/>
            <person name="Tagami M."/>
            <person name="Waki K."/>
            <person name="Watahiki A."/>
            <person name="Okamura-Oho Y."/>
            <person name="Suzuki H."/>
            <person name="Kawai J."/>
            <person name="Hayashizaki Y."/>
        </authorList>
    </citation>
    <scope>NUCLEOTIDE SEQUENCE [LARGE SCALE MRNA]</scope>
    <source>
        <strain>NOD</strain>
        <tissue>Dendritic cell</tissue>
    </source>
</reference>
<reference key="2">
    <citation type="journal article" date="2004" name="Genome Res.">
        <title>The status, quality, and expansion of the NIH full-length cDNA project: the Mammalian Gene Collection (MGC).</title>
        <authorList>
            <consortium name="The MGC Project Team"/>
        </authorList>
    </citation>
    <scope>NUCLEOTIDE SEQUENCE [LARGE SCALE MRNA]</scope>
    <source>
        <strain>C57BL/6J</strain>
        <tissue>Brain</tissue>
        <tissue>Eye</tissue>
        <tissue>Mammary gland</tissue>
    </source>
</reference>
<gene>
    <name type="primary">Rpf1</name>
    <name type="synonym">Bxdc5</name>
</gene>
<keyword id="KW-0539">Nucleus</keyword>
<keyword id="KW-1185">Reference proteome</keyword>
<keyword id="KW-0690">Ribosome biogenesis</keyword>
<keyword id="KW-0694">RNA-binding</keyword>
<keyword id="KW-0698">rRNA processing</keyword>
<keyword id="KW-0699">rRNA-binding</keyword>
<accession>Q7TND5</accession>
<accession>Q3TBS4</accession>
<accession>Q5EBN9</accession>
<accession>Q8K343</accession>
<sequence>MAKAGEKSVGGGKRGLKRKAAAEEPQEAAAASDGTAESGVQPAKAAAFPPGFSISEIKNKQRRHLMFTRWKQQQRKEKLAAKKKLKKEREALGDKAPPKPVPKTIDNQRVYDETTVDPNDEEVAYDEATDEFASYFNRQTSPKILITTSDRPHGRTVRLCEQLSTVIPDSHVYYRRGLALKKIIPQCIARDFTDLIVINEDRKTPNGLILSHLPNGPTAHFKMSSVRLRKEIKRRGKDPTEHVPEIILNNFTTRLGHSIGRMFASLFPHNPQFIGRQVATFHNQRDYIFFRFHRYIFKSEKKVGIQELGPRFTLKLRSLQKGTFDSKYGEYEWVHKPREMDTSRRKFHL</sequence>
<comment type="function">
    <text evidence="1">May be required for ribosome biogenesis.</text>
</comment>
<comment type="subcellular location">
    <subcellularLocation>
        <location evidence="1">Nucleus</location>
        <location evidence="1">Nucleolus</location>
    </subcellularLocation>
</comment>
<comment type="sequence caution" evidence="4">
    <conflict type="miscellaneous discrepancy">
        <sequence resource="EMBL-CDS" id="AAH28802"/>
    </conflict>
    <text>Intron retention.</text>
</comment>
<comment type="sequence caution" evidence="4">
    <conflict type="erroneous initiation">
        <sequence resource="EMBL-CDS" id="AAH56165"/>
    </conflict>
</comment>
<comment type="sequence caution" evidence="4">
    <conflict type="erroneous initiation">
        <sequence resource="EMBL-CDS" id="AAH89369"/>
    </conflict>
</comment>
<feature type="chain" id="PRO_0000120249" description="Ribosome production factor 1">
    <location>
        <begin position="1"/>
        <end position="349"/>
    </location>
</feature>
<feature type="domain" description="Brix" evidence="2">
    <location>
        <begin position="142"/>
        <end position="325"/>
    </location>
</feature>
<feature type="region of interest" description="Disordered" evidence="3">
    <location>
        <begin position="1"/>
        <end position="58"/>
    </location>
</feature>
<feature type="region of interest" description="Disordered" evidence="3">
    <location>
        <begin position="71"/>
        <end position="105"/>
    </location>
</feature>
<feature type="region of interest" description="RNA-binding" evidence="1">
    <location>
        <begin position="303"/>
        <end position="320"/>
    </location>
</feature>
<feature type="compositionally biased region" description="Basic and acidic residues" evidence="3">
    <location>
        <begin position="87"/>
        <end position="97"/>
    </location>
</feature>
<feature type="sequence conflict" description="In Ref. 1; BAE42233." evidence="4" ref="1">
    <original>A</original>
    <variation>V</variation>
    <location>
        <position position="47"/>
    </location>
</feature>
<feature type="sequence conflict" description="In Ref. 1; BAE42233." evidence="4" ref="1">
    <original>S</original>
    <variation>G</variation>
    <location>
        <position position="299"/>
    </location>
</feature>
<protein>
    <recommendedName>
        <fullName>Ribosome production factor 1</fullName>
    </recommendedName>
    <alternativeName>
        <fullName>Brix domain-containing protein 5</fullName>
    </alternativeName>
    <alternativeName>
        <fullName>Ribosome biogenesis protein RPF1</fullName>
    </alternativeName>
</protein>
<proteinExistence type="evidence at transcript level"/>